<gene>
    <name evidence="1" type="primary">clpX</name>
    <name type="ordered locus">TM_0146</name>
</gene>
<reference key="1">
    <citation type="journal article" date="1999" name="Nature">
        <title>Evidence for lateral gene transfer between Archaea and Bacteria from genome sequence of Thermotoga maritima.</title>
        <authorList>
            <person name="Nelson K.E."/>
            <person name="Clayton R.A."/>
            <person name="Gill S.R."/>
            <person name="Gwinn M.L."/>
            <person name="Dodson R.J."/>
            <person name="Haft D.H."/>
            <person name="Hickey E.K."/>
            <person name="Peterson J.D."/>
            <person name="Nelson W.C."/>
            <person name="Ketchum K.A."/>
            <person name="McDonald L.A."/>
            <person name="Utterback T.R."/>
            <person name="Malek J.A."/>
            <person name="Linher K.D."/>
            <person name="Garrett M.M."/>
            <person name="Stewart A.M."/>
            <person name="Cotton M.D."/>
            <person name="Pratt M.S."/>
            <person name="Phillips C.A."/>
            <person name="Richardson D.L."/>
            <person name="Heidelberg J.F."/>
            <person name="Sutton G.G."/>
            <person name="Fleischmann R.D."/>
            <person name="Eisen J.A."/>
            <person name="White O."/>
            <person name="Salzberg S.L."/>
            <person name="Smith H.O."/>
            <person name="Venter J.C."/>
            <person name="Fraser C.M."/>
        </authorList>
    </citation>
    <scope>NUCLEOTIDE SEQUENCE [LARGE SCALE GENOMIC DNA]</scope>
    <source>
        <strain>ATCC 43589 / DSM 3109 / JCM 10099 / NBRC 100826 / MSB8</strain>
    </source>
</reference>
<protein>
    <recommendedName>
        <fullName evidence="1">ATP-dependent Clp protease ATP-binding subunit ClpX</fullName>
    </recommendedName>
</protein>
<organism>
    <name type="scientific">Thermotoga maritima (strain ATCC 43589 / DSM 3109 / JCM 10099 / NBRC 100826 / MSB8)</name>
    <dbReference type="NCBI Taxonomy" id="243274"/>
    <lineage>
        <taxon>Bacteria</taxon>
        <taxon>Thermotogati</taxon>
        <taxon>Thermotogota</taxon>
        <taxon>Thermotogae</taxon>
        <taxon>Thermotogales</taxon>
        <taxon>Thermotogaceae</taxon>
        <taxon>Thermotoga</taxon>
    </lineage>
</organism>
<name>CLPX_THEMA</name>
<proteinExistence type="inferred from homology"/>
<keyword id="KW-0067">ATP-binding</keyword>
<keyword id="KW-0143">Chaperone</keyword>
<keyword id="KW-0479">Metal-binding</keyword>
<keyword id="KW-0547">Nucleotide-binding</keyword>
<keyword id="KW-1185">Reference proteome</keyword>
<keyword id="KW-0862">Zinc</keyword>
<feature type="chain" id="PRO_0000160444" description="ATP-dependent Clp protease ATP-binding subunit ClpX">
    <location>
        <begin position="1"/>
        <end position="406"/>
    </location>
</feature>
<feature type="domain" description="ClpX-type ZB" evidence="2">
    <location>
        <begin position="1"/>
        <end position="48"/>
    </location>
</feature>
<feature type="binding site" evidence="2">
    <location>
        <position position="6"/>
    </location>
    <ligand>
        <name>Zn(2+)</name>
        <dbReference type="ChEBI" id="CHEBI:29105"/>
    </ligand>
</feature>
<feature type="binding site" evidence="2">
    <location>
        <position position="9"/>
    </location>
    <ligand>
        <name>Zn(2+)</name>
        <dbReference type="ChEBI" id="CHEBI:29105"/>
    </ligand>
</feature>
<feature type="binding site" evidence="2">
    <location>
        <position position="29"/>
    </location>
    <ligand>
        <name>Zn(2+)</name>
        <dbReference type="ChEBI" id="CHEBI:29105"/>
    </ligand>
</feature>
<feature type="binding site" evidence="2">
    <location>
        <position position="32"/>
    </location>
    <ligand>
        <name>Zn(2+)</name>
        <dbReference type="ChEBI" id="CHEBI:29105"/>
    </ligand>
</feature>
<feature type="binding site" evidence="1">
    <location>
        <begin position="111"/>
        <end position="118"/>
    </location>
    <ligand>
        <name>ATP</name>
        <dbReference type="ChEBI" id="CHEBI:30616"/>
    </ligand>
</feature>
<accession>Q9WXZ3</accession>
<evidence type="ECO:0000255" key="1">
    <source>
        <dbReference type="HAMAP-Rule" id="MF_00175"/>
    </source>
</evidence>
<evidence type="ECO:0000255" key="2">
    <source>
        <dbReference type="PROSITE-ProRule" id="PRU01250"/>
    </source>
</evidence>
<comment type="function">
    <text evidence="1">ATP-dependent specificity component of the Clp protease. It directs the protease to specific substrates. Can perform chaperone functions in the absence of ClpP.</text>
</comment>
<comment type="subunit">
    <text evidence="1">Component of the ClpX-ClpP complex. Forms a hexameric ring that, in the presence of ATP, binds to fourteen ClpP subunits assembled into a disk-like structure with a central cavity, resembling the structure of eukaryotic proteasomes.</text>
</comment>
<comment type="similarity">
    <text evidence="1">Belongs to the ClpX chaperone family.</text>
</comment>
<dbReference type="EMBL" id="AE000512">
    <property type="protein sequence ID" value="AAD35239.1"/>
    <property type="molecule type" value="Genomic_DNA"/>
</dbReference>
<dbReference type="PIR" id="H72411">
    <property type="entry name" value="H72411"/>
</dbReference>
<dbReference type="RefSeq" id="NP_227961.1">
    <property type="nucleotide sequence ID" value="NC_000853.1"/>
</dbReference>
<dbReference type="RefSeq" id="WP_004082752.1">
    <property type="nucleotide sequence ID" value="NC_000853.1"/>
</dbReference>
<dbReference type="SMR" id="Q9WXZ3"/>
<dbReference type="FunCoup" id="Q9WXZ3">
    <property type="interactions" value="285"/>
</dbReference>
<dbReference type="STRING" id="243274.TM_0146"/>
<dbReference type="PaxDb" id="243274-THEMA_04070"/>
<dbReference type="EnsemblBacteria" id="AAD35239">
    <property type="protein sequence ID" value="AAD35239"/>
    <property type="gene ID" value="TM_0146"/>
</dbReference>
<dbReference type="KEGG" id="tma:TM0146"/>
<dbReference type="KEGG" id="tmi:THEMA_04070"/>
<dbReference type="KEGG" id="tmm:Tmari_0144"/>
<dbReference type="KEGG" id="tmw:THMA_0142"/>
<dbReference type="eggNOG" id="COG1219">
    <property type="taxonomic scope" value="Bacteria"/>
</dbReference>
<dbReference type="InParanoid" id="Q9WXZ3"/>
<dbReference type="OrthoDB" id="9804062at2"/>
<dbReference type="Proteomes" id="UP000008183">
    <property type="component" value="Chromosome"/>
</dbReference>
<dbReference type="GO" id="GO:0009376">
    <property type="term" value="C:HslUV protease complex"/>
    <property type="evidence" value="ECO:0000318"/>
    <property type="project" value="GO_Central"/>
</dbReference>
<dbReference type="GO" id="GO:0005524">
    <property type="term" value="F:ATP binding"/>
    <property type="evidence" value="ECO:0000318"/>
    <property type="project" value="GO_Central"/>
</dbReference>
<dbReference type="GO" id="GO:0016887">
    <property type="term" value="F:ATP hydrolysis activity"/>
    <property type="evidence" value="ECO:0000318"/>
    <property type="project" value="GO_Central"/>
</dbReference>
<dbReference type="GO" id="GO:0140662">
    <property type="term" value="F:ATP-dependent protein folding chaperone"/>
    <property type="evidence" value="ECO:0007669"/>
    <property type="project" value="InterPro"/>
</dbReference>
<dbReference type="GO" id="GO:0046983">
    <property type="term" value="F:protein dimerization activity"/>
    <property type="evidence" value="ECO:0007669"/>
    <property type="project" value="InterPro"/>
</dbReference>
<dbReference type="GO" id="GO:0051082">
    <property type="term" value="F:unfolded protein binding"/>
    <property type="evidence" value="ECO:0007669"/>
    <property type="project" value="UniProtKB-UniRule"/>
</dbReference>
<dbReference type="GO" id="GO:0008270">
    <property type="term" value="F:zinc ion binding"/>
    <property type="evidence" value="ECO:0007669"/>
    <property type="project" value="InterPro"/>
</dbReference>
<dbReference type="GO" id="GO:0051301">
    <property type="term" value="P:cell division"/>
    <property type="evidence" value="ECO:0000318"/>
    <property type="project" value="GO_Central"/>
</dbReference>
<dbReference type="GO" id="GO:0051603">
    <property type="term" value="P:proteolysis involved in protein catabolic process"/>
    <property type="evidence" value="ECO:0000318"/>
    <property type="project" value="GO_Central"/>
</dbReference>
<dbReference type="CDD" id="cd19497">
    <property type="entry name" value="RecA-like_ClpX"/>
    <property type="match status" value="1"/>
</dbReference>
<dbReference type="FunFam" id="1.10.8.60:FF:000002">
    <property type="entry name" value="ATP-dependent Clp protease ATP-binding subunit ClpX"/>
    <property type="match status" value="1"/>
</dbReference>
<dbReference type="FunFam" id="3.40.50.300:FF:000005">
    <property type="entry name" value="ATP-dependent Clp protease ATP-binding subunit ClpX"/>
    <property type="match status" value="1"/>
</dbReference>
<dbReference type="Gene3D" id="1.10.8.60">
    <property type="match status" value="1"/>
</dbReference>
<dbReference type="Gene3D" id="6.20.220.10">
    <property type="entry name" value="ClpX chaperone, C4-type zinc finger domain"/>
    <property type="match status" value="1"/>
</dbReference>
<dbReference type="Gene3D" id="3.40.50.300">
    <property type="entry name" value="P-loop containing nucleotide triphosphate hydrolases"/>
    <property type="match status" value="1"/>
</dbReference>
<dbReference type="HAMAP" id="MF_00175">
    <property type="entry name" value="ClpX"/>
    <property type="match status" value="1"/>
</dbReference>
<dbReference type="InterPro" id="IPR003593">
    <property type="entry name" value="AAA+_ATPase"/>
</dbReference>
<dbReference type="InterPro" id="IPR050052">
    <property type="entry name" value="ATP-dep_Clp_protease_ClpX"/>
</dbReference>
<dbReference type="InterPro" id="IPR003959">
    <property type="entry name" value="ATPase_AAA_core"/>
</dbReference>
<dbReference type="InterPro" id="IPR019489">
    <property type="entry name" value="Clp_ATPase_C"/>
</dbReference>
<dbReference type="InterPro" id="IPR004487">
    <property type="entry name" value="Clp_protease_ATP-bd_su_ClpX"/>
</dbReference>
<dbReference type="InterPro" id="IPR046425">
    <property type="entry name" value="ClpX_bact"/>
</dbReference>
<dbReference type="InterPro" id="IPR027417">
    <property type="entry name" value="P-loop_NTPase"/>
</dbReference>
<dbReference type="InterPro" id="IPR010603">
    <property type="entry name" value="Znf_CppX_C4"/>
</dbReference>
<dbReference type="InterPro" id="IPR038366">
    <property type="entry name" value="Znf_CppX_C4_sf"/>
</dbReference>
<dbReference type="NCBIfam" id="TIGR00382">
    <property type="entry name" value="clpX"/>
    <property type="match status" value="1"/>
</dbReference>
<dbReference type="NCBIfam" id="NF003745">
    <property type="entry name" value="PRK05342.1"/>
    <property type="match status" value="1"/>
</dbReference>
<dbReference type="PANTHER" id="PTHR48102:SF7">
    <property type="entry name" value="ATP-DEPENDENT CLP PROTEASE ATP-BINDING SUBUNIT CLPX-LIKE, MITOCHONDRIAL"/>
    <property type="match status" value="1"/>
</dbReference>
<dbReference type="PANTHER" id="PTHR48102">
    <property type="entry name" value="ATP-DEPENDENT CLP PROTEASE ATP-BINDING SUBUNIT CLPX-LIKE, MITOCHONDRIAL-RELATED"/>
    <property type="match status" value="1"/>
</dbReference>
<dbReference type="Pfam" id="PF07724">
    <property type="entry name" value="AAA_2"/>
    <property type="match status" value="1"/>
</dbReference>
<dbReference type="Pfam" id="PF10431">
    <property type="entry name" value="ClpB_D2-small"/>
    <property type="match status" value="1"/>
</dbReference>
<dbReference type="Pfam" id="PF06689">
    <property type="entry name" value="zf-C4_ClpX"/>
    <property type="match status" value="1"/>
</dbReference>
<dbReference type="SMART" id="SM00382">
    <property type="entry name" value="AAA"/>
    <property type="match status" value="1"/>
</dbReference>
<dbReference type="SMART" id="SM01086">
    <property type="entry name" value="ClpB_D2-small"/>
    <property type="match status" value="1"/>
</dbReference>
<dbReference type="SMART" id="SM00994">
    <property type="entry name" value="zf-C4_ClpX"/>
    <property type="match status" value="1"/>
</dbReference>
<dbReference type="SUPFAM" id="SSF57716">
    <property type="entry name" value="Glucocorticoid receptor-like (DNA-binding domain)"/>
    <property type="match status" value="1"/>
</dbReference>
<dbReference type="SUPFAM" id="SSF52540">
    <property type="entry name" value="P-loop containing nucleoside triphosphate hydrolases"/>
    <property type="match status" value="1"/>
</dbReference>
<dbReference type="PROSITE" id="PS51902">
    <property type="entry name" value="CLPX_ZB"/>
    <property type="match status" value="1"/>
</dbReference>
<sequence length="406" mass="45525">MAGKFCSFCGRDIQQVERLIAGPNNVYICNECIDLFHDLLRSDRKVRIKNEIKEIPTPAEIKAELDKYIIGQERAKKVLSVAVYNHYKRVFSNLDSNDVEIEKSNVLLIGPTGTGKTYLARILAKILNVPFAIADATPLTEAGYVGEDVENVVLRLLEAANFDVERAQYGIIYIDEIDKIAKKSPNPSITRDVSGEGVQQALLKILEGTIANVPPQGGRKHPYQEFIKVDTRNILFIAGGAFDGLEEIIKRRIQSTTMGFGAEIKSKKEMRLGEILKHVTPDDLVQYGLIPEFVGRFPVIATLDDLSEDDLVRILKEPKNAVVRQYQKLFEIDGVKLEVTDEALRIIARKALKRGTGARALKNVFEEMMIDMMFELPNLKNVEKVVITEEVALGKEKPIVVMRESA</sequence>